<accession>Q5M9I1</accession>
<dbReference type="EMBL" id="BC086997">
    <property type="protein sequence ID" value="AAH86997.1"/>
    <property type="molecule type" value="mRNA"/>
</dbReference>
<dbReference type="RefSeq" id="NP_001019508.1">
    <property type="nucleotide sequence ID" value="NM_001024337.1"/>
</dbReference>
<dbReference type="RefSeq" id="XP_006237499.1">
    <property type="nucleotide sequence ID" value="XM_006237437.3"/>
</dbReference>
<dbReference type="RefSeq" id="XP_006237500.1">
    <property type="nucleotide sequence ID" value="XM_006237438.3"/>
</dbReference>
<dbReference type="RefSeq" id="XP_008761544.1">
    <property type="nucleotide sequence ID" value="XM_008763322.2"/>
</dbReference>
<dbReference type="RefSeq" id="XP_017448537.1">
    <property type="nucleotide sequence ID" value="XM_017593048.1"/>
</dbReference>
<dbReference type="RefSeq" id="XP_017458358.1">
    <property type="nucleotide sequence ID" value="XM_017602869.1"/>
</dbReference>
<dbReference type="RefSeq" id="XP_038964141.1">
    <property type="nucleotide sequence ID" value="XM_039108213.2"/>
</dbReference>
<dbReference type="RefSeq" id="XP_038964142.1">
    <property type="nucleotide sequence ID" value="XM_039108214.2"/>
</dbReference>
<dbReference type="SMR" id="Q5M9I1"/>
<dbReference type="FunCoup" id="Q5M9I1">
    <property type="interactions" value="51"/>
</dbReference>
<dbReference type="GlyGen" id="Q5M9I1">
    <property type="glycosylation" value="1 site"/>
</dbReference>
<dbReference type="PaxDb" id="10116-ENSRNOP00000042979"/>
<dbReference type="Ensembl" id="ENSRNOT00000043078.4">
    <property type="protein sequence ID" value="ENSRNOP00000050011.3"/>
    <property type="gene ID" value="ENSRNOG00000030522.5"/>
</dbReference>
<dbReference type="GeneID" id="500331"/>
<dbReference type="KEGG" id="rno:500331"/>
<dbReference type="UCSC" id="RGD:1564464">
    <property type="organism name" value="rat"/>
</dbReference>
<dbReference type="AGR" id="RGD:1564464"/>
<dbReference type="CTD" id="500331"/>
<dbReference type="RGD" id="1564464">
    <property type="gene designation" value="LOC500331"/>
</dbReference>
<dbReference type="VEuPathDB" id="HostDB:ENSRNOG00000048726"/>
<dbReference type="eggNOG" id="KOG4297">
    <property type="taxonomic scope" value="Eukaryota"/>
</dbReference>
<dbReference type="GeneTree" id="ENSGT00940000155319"/>
<dbReference type="InParanoid" id="Q5M9I1"/>
<dbReference type="OMA" id="IFCASLE"/>
<dbReference type="OrthoDB" id="9906043at2759"/>
<dbReference type="PhylomeDB" id="Q5M9I1"/>
<dbReference type="TreeFam" id="TF351467"/>
<dbReference type="PRO" id="PR:Q5M9I1"/>
<dbReference type="Proteomes" id="UP000002494">
    <property type="component" value="Chromosome 4"/>
</dbReference>
<dbReference type="Bgee" id="ENSRNOG00000030522">
    <property type="expression patterns" value="Expressed in testis and 18 other cell types or tissues"/>
</dbReference>
<dbReference type="GO" id="GO:0009897">
    <property type="term" value="C:external side of plasma membrane"/>
    <property type="evidence" value="ECO:0000318"/>
    <property type="project" value="GO_Central"/>
</dbReference>
<dbReference type="GO" id="GO:0030246">
    <property type="term" value="F:carbohydrate binding"/>
    <property type="evidence" value="ECO:0007669"/>
    <property type="project" value="UniProtKB-KW"/>
</dbReference>
<dbReference type="GO" id="GO:0046703">
    <property type="term" value="F:natural killer cell lectin-like receptor binding"/>
    <property type="evidence" value="ECO:0000318"/>
    <property type="project" value="GO_Central"/>
</dbReference>
<dbReference type="CDD" id="cd03593">
    <property type="entry name" value="CLECT_NK_receptors_like"/>
    <property type="match status" value="1"/>
</dbReference>
<dbReference type="Gene3D" id="3.10.100.10">
    <property type="entry name" value="Mannose-Binding Protein A, subunit A"/>
    <property type="match status" value="1"/>
</dbReference>
<dbReference type="InterPro" id="IPR001304">
    <property type="entry name" value="C-type_lectin-like"/>
</dbReference>
<dbReference type="InterPro" id="IPR016186">
    <property type="entry name" value="C-type_lectin-like/link_sf"/>
</dbReference>
<dbReference type="InterPro" id="IPR050828">
    <property type="entry name" value="C-type_lectin/matrix_domain"/>
</dbReference>
<dbReference type="InterPro" id="IPR016187">
    <property type="entry name" value="CTDL_fold"/>
</dbReference>
<dbReference type="InterPro" id="IPR033992">
    <property type="entry name" value="NKR-like_CTLD"/>
</dbReference>
<dbReference type="PANTHER" id="PTHR45710:SF19">
    <property type="entry name" value="C-TYPE LECTIN DOMAIN FAMILY 2 MEMBER D-RELATED"/>
    <property type="match status" value="1"/>
</dbReference>
<dbReference type="PANTHER" id="PTHR45710">
    <property type="entry name" value="C-TYPE LECTIN DOMAIN-CONTAINING PROTEIN 180"/>
    <property type="match status" value="1"/>
</dbReference>
<dbReference type="Pfam" id="PF00059">
    <property type="entry name" value="Lectin_C"/>
    <property type="match status" value="1"/>
</dbReference>
<dbReference type="SMART" id="SM00034">
    <property type="entry name" value="CLECT"/>
    <property type="match status" value="1"/>
</dbReference>
<dbReference type="SUPFAM" id="SSF56436">
    <property type="entry name" value="C-type lectin-like"/>
    <property type="match status" value="1"/>
</dbReference>
<dbReference type="PROSITE" id="PS50041">
    <property type="entry name" value="C_TYPE_LECTIN_2"/>
    <property type="match status" value="1"/>
</dbReference>
<evidence type="ECO:0000250" key="1"/>
<evidence type="ECO:0000255" key="2"/>
<evidence type="ECO:0000255" key="3">
    <source>
        <dbReference type="PROSITE-ProRule" id="PRU00040"/>
    </source>
</evidence>
<evidence type="ECO:0000256" key="4">
    <source>
        <dbReference type="SAM" id="MobiDB-lite"/>
    </source>
</evidence>
<reference key="1">
    <citation type="journal article" date="2004" name="Genome Res.">
        <title>The status, quality, and expansion of the NIH full-length cDNA project: the Mammalian Gene Collection (MGC).</title>
        <authorList>
            <consortium name="The MGC Project Team"/>
        </authorList>
    </citation>
    <scope>NUCLEOTIDE SEQUENCE [LARGE SCALE MRNA]</scope>
    <source>
        <tissue>Testis</tissue>
    </source>
</reference>
<comment type="function">
    <text evidence="1">Lectin-type cell surface receptor.</text>
</comment>
<comment type="subcellular location">
    <subcellularLocation>
        <location evidence="1">Cell membrane</location>
        <topology evidence="1">Single-pass type II membrane protein</topology>
    </subcellularLocation>
</comment>
<protein>
    <recommendedName>
        <fullName>C-type lectin domain family 2 member D-related protein</fullName>
    </recommendedName>
</protein>
<proteinExistence type="evidence at transcript level"/>
<name>CL2DR_RAT</name>
<keyword id="KW-1003">Cell membrane</keyword>
<keyword id="KW-0325">Glycoprotein</keyword>
<keyword id="KW-0430">Lectin</keyword>
<keyword id="KW-0472">Membrane</keyword>
<keyword id="KW-0675">Receptor</keyword>
<keyword id="KW-1185">Reference proteome</keyword>
<keyword id="KW-0735">Signal-anchor</keyword>
<keyword id="KW-0812">Transmembrane</keyword>
<keyword id="KW-1133">Transmembrane helix</keyword>
<feature type="chain" id="PRO_0000315297" description="C-type lectin domain family 2 member D-related protein">
    <location>
        <begin position="1"/>
        <end position="235"/>
    </location>
</feature>
<feature type="topological domain" description="Cytoplasmic" evidence="2">
    <location>
        <begin position="1"/>
        <end position="75"/>
    </location>
</feature>
<feature type="transmembrane region" description="Helical; Signal-anchor for type II membrane protein" evidence="2">
    <location>
        <begin position="76"/>
        <end position="96"/>
    </location>
</feature>
<feature type="topological domain" description="Extracellular" evidence="2">
    <location>
        <begin position="97"/>
        <end position="235"/>
    </location>
</feature>
<feature type="domain" description="C-type lectin" evidence="3">
    <location>
        <begin position="121"/>
        <end position="232"/>
    </location>
</feature>
<feature type="region of interest" description="Disordered" evidence="4">
    <location>
        <begin position="1"/>
        <end position="50"/>
    </location>
</feature>
<feature type="compositionally biased region" description="Low complexity" evidence="4">
    <location>
        <begin position="30"/>
        <end position="50"/>
    </location>
</feature>
<feature type="glycosylation site" description="N-linked (GlcNAc...) asparagine" evidence="2">
    <location>
        <position position="134"/>
    </location>
</feature>
<sequence length="235" mass="26114">MPSSAHLQDPPPHLSRTLTQDEEQTSLRQSSSCGPSTTSASASESLSGSTKSRISQKKLLEGMLPKIIPTESAAKLLCCYAVFMALTVVVIALSIALSVKKTPQISAVNTYAACQRNWIGFGNKCYYFNETARNWTFSQTLCKEQEAELARFDNEEELNFLKRYKGSSGYWIGLHRESSADPWKWTDNTAYNNLVPIKGEEKHGFLSDNGLSSGKDYIKRKSICSKLNSYTSQCP</sequence>
<organism>
    <name type="scientific">Rattus norvegicus</name>
    <name type="common">Rat</name>
    <dbReference type="NCBI Taxonomy" id="10116"/>
    <lineage>
        <taxon>Eukaryota</taxon>
        <taxon>Metazoa</taxon>
        <taxon>Chordata</taxon>
        <taxon>Craniata</taxon>
        <taxon>Vertebrata</taxon>
        <taxon>Euteleostomi</taxon>
        <taxon>Mammalia</taxon>
        <taxon>Eutheria</taxon>
        <taxon>Euarchontoglires</taxon>
        <taxon>Glires</taxon>
        <taxon>Rodentia</taxon>
        <taxon>Myomorpha</taxon>
        <taxon>Muroidea</taxon>
        <taxon>Muridae</taxon>
        <taxon>Murinae</taxon>
        <taxon>Rattus</taxon>
    </lineage>
</organism>